<proteinExistence type="inferred from homology"/>
<comment type="function">
    <text evidence="1">One of the early assembly proteins it binds 23S rRNA. One of the proteins that surrounds the polypeptide exit tunnel on the outside of the ribosome. Forms the main docking site for trigger factor binding to the ribosome.</text>
</comment>
<comment type="subunit">
    <text evidence="1">Part of the 50S ribosomal subunit. Contacts protein L29, and trigger factor when it is bound to the ribosome.</text>
</comment>
<comment type="similarity">
    <text evidence="1">Belongs to the universal ribosomal protein uL23 family.</text>
</comment>
<protein>
    <recommendedName>
        <fullName evidence="1">Large ribosomal subunit protein uL23</fullName>
    </recommendedName>
    <alternativeName>
        <fullName evidence="2">50S ribosomal protein L23</fullName>
    </alternativeName>
</protein>
<accession>A7FZ67</accession>
<sequence length="97" mass="11160">MKLTNYDIIRRPLITEKTMASMADKKYTFVVDIHANKSQIKNAIETIFDVKVEDVKTARIMGKTKRVGVHIGKRPDYKKAIVKLTEDSKTIEFFEGL</sequence>
<evidence type="ECO:0000255" key="1">
    <source>
        <dbReference type="HAMAP-Rule" id="MF_01369"/>
    </source>
</evidence>
<evidence type="ECO:0000305" key="2"/>
<dbReference type="EMBL" id="CP000726">
    <property type="protein sequence ID" value="ABS34593.1"/>
    <property type="molecule type" value="Genomic_DNA"/>
</dbReference>
<dbReference type="RefSeq" id="WP_003357444.1">
    <property type="nucleotide sequence ID" value="NC_009697.1"/>
</dbReference>
<dbReference type="SMR" id="A7FZ67"/>
<dbReference type="GeneID" id="92940248"/>
<dbReference type="KEGG" id="cba:CLB_3535"/>
<dbReference type="HOGENOM" id="CLU_037562_3_2_9"/>
<dbReference type="GO" id="GO:1990904">
    <property type="term" value="C:ribonucleoprotein complex"/>
    <property type="evidence" value="ECO:0007669"/>
    <property type="project" value="UniProtKB-KW"/>
</dbReference>
<dbReference type="GO" id="GO:0005840">
    <property type="term" value="C:ribosome"/>
    <property type="evidence" value="ECO:0007669"/>
    <property type="project" value="UniProtKB-KW"/>
</dbReference>
<dbReference type="GO" id="GO:0019843">
    <property type="term" value="F:rRNA binding"/>
    <property type="evidence" value="ECO:0007669"/>
    <property type="project" value="UniProtKB-UniRule"/>
</dbReference>
<dbReference type="GO" id="GO:0003735">
    <property type="term" value="F:structural constituent of ribosome"/>
    <property type="evidence" value="ECO:0007669"/>
    <property type="project" value="InterPro"/>
</dbReference>
<dbReference type="GO" id="GO:0006412">
    <property type="term" value="P:translation"/>
    <property type="evidence" value="ECO:0007669"/>
    <property type="project" value="UniProtKB-UniRule"/>
</dbReference>
<dbReference type="FunFam" id="3.30.70.330:FF:000001">
    <property type="entry name" value="50S ribosomal protein L23"/>
    <property type="match status" value="1"/>
</dbReference>
<dbReference type="Gene3D" id="3.30.70.330">
    <property type="match status" value="1"/>
</dbReference>
<dbReference type="HAMAP" id="MF_01369_B">
    <property type="entry name" value="Ribosomal_uL23_B"/>
    <property type="match status" value="1"/>
</dbReference>
<dbReference type="InterPro" id="IPR012677">
    <property type="entry name" value="Nucleotide-bd_a/b_plait_sf"/>
</dbReference>
<dbReference type="InterPro" id="IPR013025">
    <property type="entry name" value="Ribosomal_uL23-like"/>
</dbReference>
<dbReference type="InterPro" id="IPR012678">
    <property type="entry name" value="Ribosomal_uL23/eL15/eS24_sf"/>
</dbReference>
<dbReference type="InterPro" id="IPR001014">
    <property type="entry name" value="Ribosomal_uL23_CS"/>
</dbReference>
<dbReference type="NCBIfam" id="NF004363">
    <property type="entry name" value="PRK05738.2-4"/>
    <property type="match status" value="1"/>
</dbReference>
<dbReference type="PANTHER" id="PTHR11620">
    <property type="entry name" value="60S RIBOSOMAL PROTEIN L23A"/>
    <property type="match status" value="1"/>
</dbReference>
<dbReference type="Pfam" id="PF00276">
    <property type="entry name" value="Ribosomal_L23"/>
    <property type="match status" value="1"/>
</dbReference>
<dbReference type="SUPFAM" id="SSF54189">
    <property type="entry name" value="Ribosomal proteins S24e, L23 and L15e"/>
    <property type="match status" value="1"/>
</dbReference>
<dbReference type="PROSITE" id="PS00050">
    <property type="entry name" value="RIBOSOMAL_L23"/>
    <property type="match status" value="1"/>
</dbReference>
<reference key="1">
    <citation type="journal article" date="2007" name="PLoS ONE">
        <title>Analysis of the neurotoxin complex genes in Clostridium botulinum A1-A4 and B1 strains: BoNT/A3, /Ba4 and /B1 clusters are located within plasmids.</title>
        <authorList>
            <person name="Smith T.J."/>
            <person name="Hill K.K."/>
            <person name="Foley B.T."/>
            <person name="Detter J.C."/>
            <person name="Munk A.C."/>
            <person name="Bruce D.C."/>
            <person name="Doggett N.A."/>
            <person name="Smith L.A."/>
            <person name="Marks J.D."/>
            <person name="Xie G."/>
            <person name="Brettin T.S."/>
        </authorList>
    </citation>
    <scope>NUCLEOTIDE SEQUENCE [LARGE SCALE GENOMIC DNA]</scope>
    <source>
        <strain>ATCC 19397 / Type A</strain>
    </source>
</reference>
<organism>
    <name type="scientific">Clostridium botulinum (strain ATCC 19397 / Type A)</name>
    <dbReference type="NCBI Taxonomy" id="441770"/>
    <lineage>
        <taxon>Bacteria</taxon>
        <taxon>Bacillati</taxon>
        <taxon>Bacillota</taxon>
        <taxon>Clostridia</taxon>
        <taxon>Eubacteriales</taxon>
        <taxon>Clostridiaceae</taxon>
        <taxon>Clostridium</taxon>
    </lineage>
</organism>
<keyword id="KW-0687">Ribonucleoprotein</keyword>
<keyword id="KW-0689">Ribosomal protein</keyword>
<keyword id="KW-0694">RNA-binding</keyword>
<keyword id="KW-0699">rRNA-binding</keyword>
<name>RL23_CLOB1</name>
<feature type="chain" id="PRO_1000068063" description="Large ribosomal subunit protein uL23">
    <location>
        <begin position="1"/>
        <end position="97"/>
    </location>
</feature>
<gene>
    <name evidence="1" type="primary">rplW</name>
    <name type="ordered locus">CLB_3535</name>
</gene>